<keyword id="KW-0963">Cytoplasm</keyword>
<keyword id="KW-1185">Reference proteome</keyword>
<keyword id="KW-0690">Ribosome biogenesis</keyword>
<proteinExistence type="inferred from homology"/>
<comment type="function">
    <text evidence="1">Required for maturation of 30S ribosomal subunits.</text>
</comment>
<comment type="subcellular location">
    <subcellularLocation>
        <location evidence="1">Cytoplasm</location>
    </subcellularLocation>
</comment>
<comment type="similarity">
    <text evidence="1">Belongs to the RimP family.</text>
</comment>
<sequence length="194" mass="21512">MSDLIAKTSMDRRMAEIVTPSIEALGFEVVRIRVMGGKTNTLQIMAERPDGGIDVDECAQISNAISVLLDVEDPLEDAYALEVSSPGIDRPLTRLKDFETFEGYEAKLETTEMIGGQRRFKGVLAGVEDDEVLVNLEQGSETVTVGLNFDWLSDAKLVLTDELIKEMLKQRKDAGLINETQFDDIEEDPSNPED</sequence>
<organism>
    <name type="scientific">Jannaschia sp. (strain CCS1)</name>
    <dbReference type="NCBI Taxonomy" id="290400"/>
    <lineage>
        <taxon>Bacteria</taxon>
        <taxon>Pseudomonadati</taxon>
        <taxon>Pseudomonadota</taxon>
        <taxon>Alphaproteobacteria</taxon>
        <taxon>Rhodobacterales</taxon>
        <taxon>Roseobacteraceae</taxon>
        <taxon>Jannaschia</taxon>
    </lineage>
</organism>
<gene>
    <name evidence="1" type="primary">rimP</name>
    <name type="ordered locus">Jann_0041</name>
</gene>
<reference key="1">
    <citation type="submission" date="2006-02" db="EMBL/GenBank/DDBJ databases">
        <title>Complete sequence of chromosome of Jannaschia sp. CCS1.</title>
        <authorList>
            <consortium name="US DOE Joint Genome Institute"/>
            <person name="Copeland A."/>
            <person name="Lucas S."/>
            <person name="Lapidus A."/>
            <person name="Barry K."/>
            <person name="Detter J.C."/>
            <person name="Glavina del Rio T."/>
            <person name="Hammon N."/>
            <person name="Israni S."/>
            <person name="Pitluck S."/>
            <person name="Brettin T."/>
            <person name="Bruce D."/>
            <person name="Han C."/>
            <person name="Tapia R."/>
            <person name="Gilna P."/>
            <person name="Chertkov O."/>
            <person name="Saunders E."/>
            <person name="Schmutz J."/>
            <person name="Larimer F."/>
            <person name="Land M."/>
            <person name="Kyrpides N."/>
            <person name="Lykidis A."/>
            <person name="Moran M.A."/>
            <person name="Belas R."/>
            <person name="Ye W."/>
            <person name="Buchan A."/>
            <person name="Gonzalez J.M."/>
            <person name="Schell M.A."/>
            <person name="Richardson P."/>
        </authorList>
    </citation>
    <scope>NUCLEOTIDE SEQUENCE [LARGE SCALE GENOMIC DNA]</scope>
    <source>
        <strain>CCS1</strain>
    </source>
</reference>
<protein>
    <recommendedName>
        <fullName evidence="1">Ribosome maturation factor RimP</fullName>
    </recommendedName>
</protein>
<name>RIMP_JANSC</name>
<evidence type="ECO:0000255" key="1">
    <source>
        <dbReference type="HAMAP-Rule" id="MF_01077"/>
    </source>
</evidence>
<dbReference type="EMBL" id="CP000264">
    <property type="protein sequence ID" value="ABD52958.1"/>
    <property type="molecule type" value="Genomic_DNA"/>
</dbReference>
<dbReference type="RefSeq" id="WP_011453167.1">
    <property type="nucleotide sequence ID" value="NC_007802.1"/>
</dbReference>
<dbReference type="SMR" id="Q28WF4"/>
<dbReference type="STRING" id="290400.Jann_0041"/>
<dbReference type="KEGG" id="jan:Jann_0041"/>
<dbReference type="eggNOG" id="COG0779">
    <property type="taxonomic scope" value="Bacteria"/>
</dbReference>
<dbReference type="HOGENOM" id="CLU_070525_0_1_5"/>
<dbReference type="OrthoDB" id="9805006at2"/>
<dbReference type="Proteomes" id="UP000008326">
    <property type="component" value="Chromosome"/>
</dbReference>
<dbReference type="GO" id="GO:0005829">
    <property type="term" value="C:cytosol"/>
    <property type="evidence" value="ECO:0007669"/>
    <property type="project" value="TreeGrafter"/>
</dbReference>
<dbReference type="GO" id="GO:0000028">
    <property type="term" value="P:ribosomal small subunit assembly"/>
    <property type="evidence" value="ECO:0007669"/>
    <property type="project" value="TreeGrafter"/>
</dbReference>
<dbReference type="GO" id="GO:0006412">
    <property type="term" value="P:translation"/>
    <property type="evidence" value="ECO:0007669"/>
    <property type="project" value="TreeGrafter"/>
</dbReference>
<dbReference type="CDD" id="cd01734">
    <property type="entry name" value="YlxS_C"/>
    <property type="match status" value="1"/>
</dbReference>
<dbReference type="FunFam" id="3.30.300.70:FF:000001">
    <property type="entry name" value="Ribosome maturation factor RimP"/>
    <property type="match status" value="1"/>
</dbReference>
<dbReference type="Gene3D" id="2.30.30.180">
    <property type="entry name" value="Ribosome maturation factor RimP, C-terminal domain"/>
    <property type="match status" value="1"/>
</dbReference>
<dbReference type="Gene3D" id="3.30.300.70">
    <property type="entry name" value="RimP-like superfamily, N-terminal"/>
    <property type="match status" value="1"/>
</dbReference>
<dbReference type="HAMAP" id="MF_01077">
    <property type="entry name" value="RimP"/>
    <property type="match status" value="1"/>
</dbReference>
<dbReference type="InterPro" id="IPR003728">
    <property type="entry name" value="Ribosome_maturation_RimP"/>
</dbReference>
<dbReference type="InterPro" id="IPR028998">
    <property type="entry name" value="RimP_C"/>
</dbReference>
<dbReference type="InterPro" id="IPR036847">
    <property type="entry name" value="RimP_C_sf"/>
</dbReference>
<dbReference type="InterPro" id="IPR028989">
    <property type="entry name" value="RimP_N"/>
</dbReference>
<dbReference type="InterPro" id="IPR035956">
    <property type="entry name" value="RimP_N_sf"/>
</dbReference>
<dbReference type="NCBIfam" id="NF000932">
    <property type="entry name" value="PRK00092.2-5"/>
    <property type="match status" value="1"/>
</dbReference>
<dbReference type="PANTHER" id="PTHR33867">
    <property type="entry name" value="RIBOSOME MATURATION FACTOR RIMP"/>
    <property type="match status" value="1"/>
</dbReference>
<dbReference type="PANTHER" id="PTHR33867:SF1">
    <property type="entry name" value="RIBOSOME MATURATION FACTOR RIMP"/>
    <property type="match status" value="1"/>
</dbReference>
<dbReference type="Pfam" id="PF17384">
    <property type="entry name" value="DUF150_C"/>
    <property type="match status" value="1"/>
</dbReference>
<dbReference type="Pfam" id="PF02576">
    <property type="entry name" value="RimP_N"/>
    <property type="match status" value="1"/>
</dbReference>
<dbReference type="SUPFAM" id="SSF74942">
    <property type="entry name" value="YhbC-like, C-terminal domain"/>
    <property type="match status" value="1"/>
</dbReference>
<dbReference type="SUPFAM" id="SSF75420">
    <property type="entry name" value="YhbC-like, N-terminal domain"/>
    <property type="match status" value="1"/>
</dbReference>
<accession>Q28WF4</accession>
<feature type="chain" id="PRO_0000384685" description="Ribosome maturation factor RimP">
    <location>
        <begin position="1"/>
        <end position="194"/>
    </location>
</feature>